<keyword id="KW-0002">3D-structure</keyword>
<keyword id="KW-0965">Cell junction</keyword>
<keyword id="KW-0963">Cytoplasm</keyword>
<keyword id="KW-0206">Cytoskeleton</keyword>
<keyword id="KW-0597">Phosphoprotein</keyword>
<keyword id="KW-1267">Proteomics identification</keyword>
<keyword id="KW-1185">Reference proteome</keyword>
<organism>
    <name type="scientific">Homo sapiens</name>
    <name type="common">Human</name>
    <dbReference type="NCBI Taxonomy" id="9606"/>
    <lineage>
        <taxon>Eukaryota</taxon>
        <taxon>Metazoa</taxon>
        <taxon>Chordata</taxon>
        <taxon>Craniata</taxon>
        <taxon>Vertebrata</taxon>
        <taxon>Euteleostomi</taxon>
        <taxon>Mammalia</taxon>
        <taxon>Eutheria</taxon>
        <taxon>Euarchontoglires</taxon>
        <taxon>Primates</taxon>
        <taxon>Haplorrhini</taxon>
        <taxon>Catarrhini</taxon>
        <taxon>Hominidae</taxon>
        <taxon>Homo</taxon>
    </lineage>
</organism>
<proteinExistence type="evidence at protein level"/>
<dbReference type="EMBL" id="AC087465">
    <property type="status" value="NOT_ANNOTATED_CDS"/>
    <property type="molecule type" value="Genomic_DNA"/>
</dbReference>
<dbReference type="EMBL" id="AC107883">
    <property type="status" value="NOT_ANNOTATED_CDS"/>
    <property type="molecule type" value="Genomic_DNA"/>
</dbReference>
<dbReference type="EMBL" id="AK024793">
    <property type="protein sequence ID" value="BAB15006.1"/>
    <property type="status" value="ALT_INIT"/>
    <property type="molecule type" value="mRNA"/>
</dbReference>
<dbReference type="EMBL" id="AK091802">
    <property type="status" value="NOT_ANNOTATED_CDS"/>
    <property type="molecule type" value="mRNA"/>
</dbReference>
<dbReference type="EMBL" id="AK127658">
    <property type="protein sequence ID" value="BAC87076.1"/>
    <property type="status" value="ALT_INIT"/>
    <property type="molecule type" value="mRNA"/>
</dbReference>
<dbReference type="EMBL" id="AK074157">
    <property type="protein sequence ID" value="BAB84983.1"/>
    <property type="molecule type" value="mRNA"/>
</dbReference>
<dbReference type="EMBL" id="AB082533">
    <property type="protein sequence ID" value="BAC02711.1"/>
    <property type="molecule type" value="mRNA"/>
</dbReference>
<dbReference type="CCDS" id="CCDS42062.1"/>
<dbReference type="RefSeq" id="NP_001371955.1">
    <property type="nucleotide sequence ID" value="NM_001385026.1"/>
</dbReference>
<dbReference type="RefSeq" id="NP_001374014.1">
    <property type="nucleotide sequence ID" value="NM_001387085.1"/>
</dbReference>
<dbReference type="RefSeq" id="NP_001374015.1">
    <property type="nucleotide sequence ID" value="NM_001387086.1"/>
</dbReference>
<dbReference type="RefSeq" id="NP_079052.2">
    <property type="nucleotide sequence ID" value="NM_024776.3"/>
</dbReference>
<dbReference type="RefSeq" id="XP_005254727.1">
    <property type="nucleotide sequence ID" value="XM_005254670.2"/>
</dbReference>
<dbReference type="RefSeq" id="XP_005254728.1">
    <property type="nucleotide sequence ID" value="XM_005254671.2"/>
</dbReference>
<dbReference type="RefSeq" id="XP_005254730.1">
    <property type="nucleotide sequence ID" value="XM_005254673.2"/>
</dbReference>
<dbReference type="RefSeq" id="XP_005254731.1">
    <property type="nucleotide sequence ID" value="XM_005254674.2"/>
</dbReference>
<dbReference type="RefSeq" id="XP_005254732.1">
    <property type="nucleotide sequence ID" value="XM_005254675.5"/>
</dbReference>
<dbReference type="RefSeq" id="XP_011520335.1">
    <property type="nucleotide sequence ID" value="XM_011522033.2"/>
</dbReference>
<dbReference type="RefSeq" id="XP_011520336.1">
    <property type="nucleotide sequence ID" value="XM_011522034.3"/>
</dbReference>
<dbReference type="RefSeq" id="XP_011520337.1">
    <property type="nucleotide sequence ID" value="XM_011522035.3"/>
</dbReference>
<dbReference type="RefSeq" id="XP_011520338.1">
    <property type="nucleotide sequence ID" value="XM_011522036.3"/>
</dbReference>
<dbReference type="RefSeq" id="XP_011520339.1">
    <property type="nucleotide sequence ID" value="XM_011522037.3"/>
</dbReference>
<dbReference type="RefSeq" id="XP_011520340.1">
    <property type="nucleotide sequence ID" value="XM_011522038.3"/>
</dbReference>
<dbReference type="RefSeq" id="XP_011520341.1">
    <property type="nucleotide sequence ID" value="XM_011522039.3"/>
</dbReference>
<dbReference type="RefSeq" id="XP_047289010.1">
    <property type="nucleotide sequence ID" value="XM_047433054.1"/>
</dbReference>
<dbReference type="RefSeq" id="XP_047289011.1">
    <property type="nucleotide sequence ID" value="XM_047433055.1"/>
</dbReference>
<dbReference type="RefSeq" id="XP_047289012.1">
    <property type="nucleotide sequence ID" value="XM_047433056.1"/>
</dbReference>
<dbReference type="RefSeq" id="XP_047289013.1">
    <property type="nucleotide sequence ID" value="XM_047433057.1"/>
</dbReference>
<dbReference type="RefSeq" id="XP_047289014.1">
    <property type="nucleotide sequence ID" value="XM_047433058.1"/>
</dbReference>
<dbReference type="RefSeq" id="XP_047289016.1">
    <property type="nucleotide sequence ID" value="XM_047433060.1"/>
</dbReference>
<dbReference type="RefSeq" id="XP_047289017.1">
    <property type="nucleotide sequence ID" value="XM_047433061.1"/>
</dbReference>
<dbReference type="RefSeq" id="XP_047289018.1">
    <property type="nucleotide sequence ID" value="XM_047433062.1"/>
</dbReference>
<dbReference type="RefSeq" id="XP_047289019.1">
    <property type="nucleotide sequence ID" value="XM_047433063.1"/>
</dbReference>
<dbReference type="RefSeq" id="XP_047289020.1">
    <property type="nucleotide sequence ID" value="XM_047433064.1"/>
</dbReference>
<dbReference type="RefSeq" id="XP_047289021.1">
    <property type="nucleotide sequence ID" value="XM_047433065.1"/>
</dbReference>
<dbReference type="RefSeq" id="XP_047289023.1">
    <property type="nucleotide sequence ID" value="XM_047433067.1"/>
</dbReference>
<dbReference type="RefSeq" id="XP_047289024.1">
    <property type="nucleotide sequence ID" value="XM_047433068.1"/>
</dbReference>
<dbReference type="RefSeq" id="XP_047289025.1">
    <property type="nucleotide sequence ID" value="XM_047433069.1"/>
</dbReference>
<dbReference type="RefSeq" id="XP_047289026.1">
    <property type="nucleotide sequence ID" value="XM_047433070.1"/>
</dbReference>
<dbReference type="RefSeq" id="XP_047289027.1">
    <property type="nucleotide sequence ID" value="XM_047433071.1"/>
</dbReference>
<dbReference type="RefSeq" id="XP_047289028.1">
    <property type="nucleotide sequence ID" value="XM_047433072.1"/>
</dbReference>
<dbReference type="RefSeq" id="XP_047289029.1">
    <property type="nucleotide sequence ID" value="XM_047433073.1"/>
</dbReference>
<dbReference type="RefSeq" id="XP_047289030.1">
    <property type="nucleotide sequence ID" value="XM_047433074.1"/>
</dbReference>
<dbReference type="RefSeq" id="XP_047289031.1">
    <property type="nucleotide sequence ID" value="XM_047433075.1"/>
</dbReference>
<dbReference type="RefSeq" id="XP_047289032.1">
    <property type="nucleotide sequence ID" value="XM_047433076.1"/>
</dbReference>
<dbReference type="PDB" id="6BHC">
    <property type="method" value="X-ray"/>
    <property type="resolution" value="2.30 A"/>
    <property type="chains" value="A=1272-1743"/>
</dbReference>
<dbReference type="PDB" id="8DGM">
    <property type="method" value="X-ray"/>
    <property type="resolution" value="3.20 A"/>
    <property type="chains" value="B=1152-1171"/>
</dbReference>
<dbReference type="PDBsum" id="6BHC"/>
<dbReference type="PDBsum" id="8DGM"/>
<dbReference type="SMR" id="Q9H792"/>
<dbReference type="BioGRID" id="122926">
    <property type="interactions" value="154"/>
</dbReference>
<dbReference type="CORUM" id="Q9H792"/>
<dbReference type="DIP" id="DIP-56276N"/>
<dbReference type="FunCoup" id="Q9H792">
    <property type="interactions" value="1320"/>
</dbReference>
<dbReference type="IntAct" id="Q9H792">
    <property type="interactions" value="103"/>
</dbReference>
<dbReference type="MINT" id="Q9H792"/>
<dbReference type="STRING" id="9606.ENSP00000452796"/>
<dbReference type="BindingDB" id="Q9H792"/>
<dbReference type="ChEMBL" id="CHEMBL3627585"/>
<dbReference type="GlyConnect" id="1692">
    <property type="glycosylation" value="11 N-Linked glycans (1 site)"/>
</dbReference>
<dbReference type="GlyCosmos" id="Q9H792">
    <property type="glycosylation" value="1 site, 11 glycans"/>
</dbReference>
<dbReference type="GlyGen" id="Q9H792">
    <property type="glycosylation" value="8 sites, 11 N-linked glycans (1 site), 1 O-linked glycan (6 sites)"/>
</dbReference>
<dbReference type="iPTMnet" id="Q9H792"/>
<dbReference type="PhosphoSitePlus" id="Q9H792"/>
<dbReference type="BioMuta" id="PEAK1"/>
<dbReference type="DMDM" id="223634730"/>
<dbReference type="jPOST" id="Q9H792"/>
<dbReference type="MassIVE" id="Q9H792"/>
<dbReference type="PaxDb" id="9606-ENSP00000452796"/>
<dbReference type="PeptideAtlas" id="Q9H792"/>
<dbReference type="ProteomicsDB" id="81090"/>
<dbReference type="Pumba" id="Q9H792"/>
<dbReference type="Antibodypedia" id="7598">
    <property type="antibodies" value="210 antibodies from 29 providers"/>
</dbReference>
<dbReference type="DNASU" id="79834"/>
<dbReference type="Ensembl" id="ENST00000312493.5">
    <property type="protein sequence ID" value="ENSP00000309230.4"/>
    <property type="gene ID" value="ENSG00000173517.11"/>
</dbReference>
<dbReference type="Ensembl" id="ENST00000560626.6">
    <property type="protein sequence ID" value="ENSP00000452796.2"/>
    <property type="gene ID" value="ENSG00000173517.11"/>
</dbReference>
<dbReference type="Ensembl" id="ENST00000682557.1">
    <property type="protein sequence ID" value="ENSP00000507603.1"/>
    <property type="gene ID" value="ENSG00000173517.11"/>
</dbReference>
<dbReference type="GeneID" id="79834"/>
<dbReference type="KEGG" id="hsa:79834"/>
<dbReference type="MANE-Select" id="ENST00000682557.1">
    <property type="protein sequence ID" value="ENSP00000507603.1"/>
    <property type="RefSeq nucleotide sequence ID" value="NM_001385026.1"/>
    <property type="RefSeq protein sequence ID" value="NP_001371955.1"/>
</dbReference>
<dbReference type="UCSC" id="uc059lyw.1">
    <property type="organism name" value="human"/>
</dbReference>
<dbReference type="AGR" id="HGNC:29431"/>
<dbReference type="CTD" id="79834"/>
<dbReference type="DisGeNET" id="79834"/>
<dbReference type="GeneCards" id="PEAK1"/>
<dbReference type="HGNC" id="HGNC:29431">
    <property type="gene designation" value="PEAK1"/>
</dbReference>
<dbReference type="HPA" id="ENSG00000173517">
    <property type="expression patterns" value="Low tissue specificity"/>
</dbReference>
<dbReference type="MIM" id="614248">
    <property type="type" value="gene"/>
</dbReference>
<dbReference type="neXtProt" id="NX_Q9H792"/>
<dbReference type="OpenTargets" id="ENSG00000173517"/>
<dbReference type="VEuPathDB" id="HostDB:ENSG00000173517"/>
<dbReference type="eggNOG" id="ENOG502QVUZ">
    <property type="taxonomic scope" value="Eukaryota"/>
</dbReference>
<dbReference type="GeneTree" id="ENSGT00940000157591"/>
<dbReference type="HOGENOM" id="CLU_002882_0_0_1"/>
<dbReference type="InParanoid" id="Q9H792"/>
<dbReference type="OMA" id="MGWNRNR"/>
<dbReference type="OrthoDB" id="9888661at2759"/>
<dbReference type="PAN-GO" id="Q9H792">
    <property type="GO annotations" value="4 GO annotations based on evolutionary models"/>
</dbReference>
<dbReference type="PhylomeDB" id="Q9H792"/>
<dbReference type="PathwayCommons" id="Q9H792"/>
<dbReference type="Reactome" id="R-HSA-9013420">
    <property type="pathway name" value="RHOU GTPase cycle"/>
</dbReference>
<dbReference type="Reactome" id="R-HSA-9013424">
    <property type="pathway name" value="RHOV GTPase cycle"/>
</dbReference>
<dbReference type="SignaLink" id="Q9H792"/>
<dbReference type="BioGRID-ORCS" id="79834">
    <property type="hits" value="9 hits in 1130 CRISPR screens"/>
</dbReference>
<dbReference type="ChiTaRS" id="PEAK1">
    <property type="organism name" value="human"/>
</dbReference>
<dbReference type="GenomeRNAi" id="79834"/>
<dbReference type="Pharos" id="Q9H792">
    <property type="development level" value="Tchem"/>
</dbReference>
<dbReference type="PRO" id="PR:Q9H792"/>
<dbReference type="Proteomes" id="UP000005640">
    <property type="component" value="Chromosome 15"/>
</dbReference>
<dbReference type="RNAct" id="Q9H792">
    <property type="molecule type" value="protein"/>
</dbReference>
<dbReference type="Bgee" id="ENSG00000173517">
    <property type="expression patterns" value="Expressed in skin of hip and 189 other cell types or tissues"/>
</dbReference>
<dbReference type="ExpressionAtlas" id="Q9H792">
    <property type="expression patterns" value="baseline and differential"/>
</dbReference>
<dbReference type="GO" id="GO:0015629">
    <property type="term" value="C:actin cytoskeleton"/>
    <property type="evidence" value="ECO:0000314"/>
    <property type="project" value="UniProtKB"/>
</dbReference>
<dbReference type="GO" id="GO:0005829">
    <property type="term" value="C:cytosol"/>
    <property type="evidence" value="ECO:0000314"/>
    <property type="project" value="HPA"/>
</dbReference>
<dbReference type="GO" id="GO:0005925">
    <property type="term" value="C:focal adhesion"/>
    <property type="evidence" value="ECO:0000314"/>
    <property type="project" value="UniProtKB"/>
</dbReference>
<dbReference type="GO" id="GO:0042802">
    <property type="term" value="F:identical protein binding"/>
    <property type="evidence" value="ECO:0000314"/>
    <property type="project" value="UniProtKB"/>
</dbReference>
<dbReference type="GO" id="GO:0004715">
    <property type="term" value="F:non-membrane spanning protein tyrosine kinase activity"/>
    <property type="evidence" value="ECO:0000314"/>
    <property type="project" value="UniProtKB"/>
</dbReference>
<dbReference type="GO" id="GO:0004672">
    <property type="term" value="F:protein kinase activity"/>
    <property type="evidence" value="ECO:0000318"/>
    <property type="project" value="GO_Central"/>
</dbReference>
<dbReference type="GO" id="GO:0016477">
    <property type="term" value="P:cell migration"/>
    <property type="evidence" value="ECO:0000314"/>
    <property type="project" value="UniProtKB"/>
</dbReference>
<dbReference type="GO" id="GO:0048041">
    <property type="term" value="P:focal adhesion assembly"/>
    <property type="evidence" value="ECO:0000315"/>
    <property type="project" value="UniProtKB"/>
</dbReference>
<dbReference type="GO" id="GO:0046777">
    <property type="term" value="P:protein autophosphorylation"/>
    <property type="evidence" value="ECO:0000314"/>
    <property type="project" value="UniProtKB"/>
</dbReference>
<dbReference type="GO" id="GO:2000145">
    <property type="term" value="P:regulation of cell motility"/>
    <property type="evidence" value="ECO:0000318"/>
    <property type="project" value="GO_Central"/>
</dbReference>
<dbReference type="GO" id="GO:0051893">
    <property type="term" value="P:regulation of focal adhesion assembly"/>
    <property type="evidence" value="ECO:0000314"/>
    <property type="project" value="UniProtKB"/>
</dbReference>
<dbReference type="GO" id="GO:0034446">
    <property type="term" value="P:substrate adhesion-dependent cell spreading"/>
    <property type="evidence" value="ECO:0000314"/>
    <property type="project" value="UniProtKB"/>
</dbReference>
<dbReference type="FunFam" id="1.10.510.10:FF:000437">
    <property type="entry name" value="Pseudopodium enriched atypical kinase 1"/>
    <property type="match status" value="1"/>
</dbReference>
<dbReference type="Gene3D" id="1.10.510.10">
    <property type="entry name" value="Transferase(Phosphotransferase) domain 1"/>
    <property type="match status" value="1"/>
</dbReference>
<dbReference type="InterPro" id="IPR011009">
    <property type="entry name" value="Kinase-like_dom_sf"/>
</dbReference>
<dbReference type="InterPro" id="IPR051511">
    <property type="entry name" value="MitoQC_Scaffold_Kinases"/>
</dbReference>
<dbReference type="InterPro" id="IPR000719">
    <property type="entry name" value="Prot_kinase_dom"/>
</dbReference>
<dbReference type="InterPro" id="IPR008266">
    <property type="entry name" value="Tyr_kinase_AS"/>
</dbReference>
<dbReference type="PANTHER" id="PTHR22972:SF5">
    <property type="entry name" value="INACTIVE TYROSINE-PROTEIN KINASE PEAK1"/>
    <property type="match status" value="1"/>
</dbReference>
<dbReference type="PANTHER" id="PTHR22972">
    <property type="entry name" value="SERINE/THREONINE PROTEIN KINASE"/>
    <property type="match status" value="1"/>
</dbReference>
<dbReference type="Pfam" id="PF00069">
    <property type="entry name" value="Pkinase"/>
    <property type="match status" value="1"/>
</dbReference>
<dbReference type="SMART" id="SM00220">
    <property type="entry name" value="S_TKc"/>
    <property type="match status" value="1"/>
</dbReference>
<dbReference type="SUPFAM" id="SSF56112">
    <property type="entry name" value="Protein kinase-like (PK-like)"/>
    <property type="match status" value="1"/>
</dbReference>
<dbReference type="PROSITE" id="PS50011">
    <property type="entry name" value="PROTEIN_KINASE_DOM"/>
    <property type="match status" value="1"/>
</dbReference>
<dbReference type="PROSITE" id="PS00109">
    <property type="entry name" value="PROTEIN_KINASE_TYR"/>
    <property type="match status" value="1"/>
</dbReference>
<accession>Q9H792</accession>
<accession>Q6ZS78</accession>
<accession>Q8NAZ4</accession>
<accession>Q8NCM3</accession>
<accession>Q8TEG7</accession>
<sequence length="1746" mass="193106">MSACNTFTEHVWKPGECKNCFKPKSLHQLPPDPEKAPITHGNVKTNANHSNNHRIRNTGNFRPPVAKKPTIAVKPTMIVADGQSICGELSIQEHCENKPVIIGWNRNRAALSQKPLNNNNEDDEGISHVPKPYGNNDSAKKMSDNNNGLTEVLKEIAGLDTAPQIRGNETNSRETFLGRINDCYKRSLERKLPPSCMIGGIKETQGKHVILSGSTEVISNEGGRFCYPEFSSGEESEEDVLFSNMEEEHESWDESDEELLAMEIRMRGQPRFANFRANTLSPVRFFVDKKWNTIPLRNKSLQRICAVDYDDSYDEILNGYEENSVVSYGQGSIQSMVSSDSTSPDSSLTEESRSETASSLSQKICNGGLSPGNPGDSKDMKEIEPNYESPSSNNQDKDSSQASKSSIKVPETHKAVLALRLEEKDGKIAVQTEKEESKASTDVAGQAVTINLVPTEEQAKPYRVVNLEQPLCKPYTVVDVSAAMASEHLEGPVNSPKTKSSSSTPNSPVTSSSLTPGQISAHFQKSSAIRYQEVWTSSTSPRQKIPKVELITSGTGPNVPPRKNCHKSAPTSPTATNISSKTIPVKSPNLSEIKFNSYNNAGMPPFPIIIHDEPTYARSSKNAIKVPIVINPNAYDNLAIYKSFLGTSGELSVKEKTTSVISHTYEEIETESKVPDNTTSKTTDCLQTKGFSNSTEHKRGSVAQKVQEFNNCLNRGQSSPQRSYSSSHSSPAKIQRATQEPVAKIEGTQESQMVGSSSTREKASTVLSQIVASIQPPQSPPETPQSGPKACSVEELYAIPPDADVAKSTPKSTPVRPKSLFTSQPSGEAEAPQTTDSPTTKVQKDPSIKPVTPSPSKLVTSPQSEPPAPFPPPRSTSSPYHAGNLLQRHFTNWTKPTSPTRSTEAESVLHSEGSRRAADAKPKRWISFKSFFRRRKTDEEDDKEKEREKGKLVGLDGTVIHMLPPPPVQRHHWFTEAKGESSEKPAIVFMYRCDPAQGQLSVDQSKARTDQAAVMEKGRAENALLQDSEKKRSHSSPSQIPKKILSHMTHEVTEDFSPRDPRTVVGKQDGRGCTSVTTALSLPELEREDGKEDISDPMDPNPCSATYSNLGQSRAAMIPPKQPRQPKGAVDDAIAFGGKTDQEAPNASQPTPPPLPKKMIIRANTEPISKDLQKSMESSLCVMANPTYDIDPNWDASSAGSSISYELKGLDIESYDSLERPLRKERPVPSAANSISSLTTLSIKDRFSNSMESLSSRRGPSCRQGRGIQKPQRQALYRGLENREEVVGKIRSLHTDALKKLAVKCEDLFMAGQKDQLRFGVDSWSDFRLTSDKPCCEAGDAVYYTASYAKDPLNNYAVKICKSKAKESQQYYHSLAVRQSLAVHFNIQQDCGHFLAEVPNRLLPWEDPDDPEKDEDDMEETEEDAKGETDGKNPKPCSEAASSQKENQGVMSKKQRSHVVVITREVPCLTVADFVRDSLAQHGKSPDLYERQVCLLLLQLCSGLEHLKPYHVTHCDLRLENLLLVHYQPGGTAQGFGPAEPSPTSSYPTRLIVSNFSQAKQKSHLVDPEILRDQSRLAPEIITATQYKKCDEFQTGILIYEMLHLPNPFDENPELKEREYTRADLPRIPFRSPYSRGLQQLASCLLNPNPSERILISDAKGILQCLLWGPREDLFQTFTACPSLVQRNTLLQNWLDIKRTLLMIKFAEKSLDREGGISLEDWLCAQYLAFATTDSLSCIVKILQHR</sequence>
<comment type="function">
    <text evidence="5 6 7 11">Probable catalytically inactive kinase. Scaffolding protein that regulates the cytoskeleton to control cell spreading and migration by modulating focal adhesion dynamics (PubMed:20534451, PubMed:23105102, PubMed:35687021). Acts as a scaffold for mediating EGFR signaling (PubMed:23846654).</text>
</comment>
<comment type="subunit">
    <text evidence="5 7 9 10 11">Homodimer (PubMed:29212708). Interacts with BCAR1 and CRK (PubMed:20534451). Interacts with PRAG1 (PubMed:29079850). Interacts (when phosphorylated at Tyr-1188) with SHC1 (via PID domain) (PubMed:23846654, PubMed:35687021). Found in a complex with PPP1CA, PPP1CC, SHC1 and PEAK1. Interacts (when phosphorylated at Tyr-635) with tensin TNS3 (when phosphorylated on the SH2 domain); TNS3 also interacts with integrins ITGB1, ITGB3 and ITGB5 and mediates their association with PEAK1 (PubMed:35687021). Interacts with RASAL2 and GRB2 (PubMed:35687021).</text>
</comment>
<comment type="interaction">
    <interactant intactId="EBI-2609701">
        <id>Q9H792</id>
    </interactant>
    <interactant intactId="EBI-702093">
        <id>P56945</id>
        <label>BCAR1</label>
    </interactant>
    <organismsDiffer>false</organismsDiffer>
    <experiments>3</experiments>
</comment>
<comment type="subcellular location">
    <subcellularLocation>
        <location evidence="5 6">Cytoplasm</location>
        <location evidence="5 6">Cytoskeleton</location>
    </subcellularLocation>
    <subcellularLocation>
        <location evidence="5 6 11">Cell junction</location>
        <location evidence="5 6 11">Focal adhesion</location>
    </subcellularLocation>
    <text evidence="5">Colocalizes with F-actin in serum-rich medium (PubMed:20534451). Actin colocalization is reduced during serum starvation (PubMed:20534451).</text>
</comment>
<comment type="domain">
    <text evidence="10">The dimerization region encompasses helices both from the N- and C-terminal of the protein kinase domain.</text>
</comment>
<comment type="PTM">
    <text evidence="5 7 11">Phosphorylated on tyrosine in a CSK-dependent manner in response to adhesion to fibronectin and to EGF stimulation (PubMed:20534451). Phosphorylation at Tyr-665 by a Src family kinase controls subcellular localization to focal adhesion and focal adhesion dynamics (PubMed:20534451). Phosphorylation at Tyr-1188 is essential for binding to SHC1 (PubMed:23846654). Phosphorylation at Tyr-635 promotes interaction with tensin TNS3 (PubMed:35687021).</text>
</comment>
<comment type="similarity">
    <text evidence="14">Belongs to the protein kinase superfamily.</text>
</comment>
<comment type="caution">
    <text evidence="5 8 10">Has been the subject of controversy surrounding its catalytic capabilities. Early characterization of PEAK1 gave a weak in vitro tyrosine kinase activity (PubMed:20534451). The crystal structure indicates that the kinase-domain contains a closed nucleotide-binding cleft that in this conformation may deleteriously affect nucleotide binding (PubMed:29212708). Furthermore PEAK1 is devoid of nucleotide binding activity, as detected by a thermal-shift assay (PubMed:24107129). So it seems probable that PEAK1 is an inactive kinase.</text>
</comment>
<comment type="sequence caution" evidence="14">
    <conflict type="erroneous initiation">
        <sequence resource="EMBL-CDS" id="BAB15006"/>
    </conflict>
</comment>
<comment type="sequence caution" evidence="14">
    <conflict type="erroneous initiation">
        <sequence resource="EMBL-CDS" id="BAC87076"/>
    </conflict>
</comment>
<feature type="chain" id="PRO_0000250589" description="Inactive tyrosine-protein kinase PEAK1">
    <location>
        <begin position="1"/>
        <end position="1746"/>
    </location>
</feature>
<feature type="domain" description="Protein kinase" evidence="2">
    <location>
        <begin position="1313"/>
        <end position="1675"/>
    </location>
</feature>
<feature type="region of interest" description="Disordered" evidence="3">
    <location>
        <begin position="44"/>
        <end position="66"/>
    </location>
</feature>
<feature type="region of interest" description="Disordered" evidence="3">
    <location>
        <begin position="334"/>
        <end position="411"/>
    </location>
</feature>
<feature type="region of interest" description="Disordered" evidence="3">
    <location>
        <begin position="489"/>
        <end position="517"/>
    </location>
</feature>
<feature type="region of interest" description="Disordered" evidence="3">
    <location>
        <begin position="551"/>
        <end position="577"/>
    </location>
</feature>
<feature type="region of interest" description="Disordered" evidence="3">
    <location>
        <begin position="671"/>
        <end position="700"/>
    </location>
</feature>
<feature type="region of interest" description="Disordered" evidence="3">
    <location>
        <begin position="713"/>
        <end position="764"/>
    </location>
</feature>
<feature type="region of interest" description="Disordered" evidence="3">
    <location>
        <begin position="802"/>
        <end position="920"/>
    </location>
</feature>
<feature type="region of interest" description="Disordered" evidence="3">
    <location>
        <begin position="1052"/>
        <end position="1102"/>
    </location>
</feature>
<feature type="region of interest" description="Disordered" evidence="3">
    <location>
        <begin position="1138"/>
        <end position="1158"/>
    </location>
</feature>
<feature type="region of interest" description="Required for homodimerization" evidence="10">
    <location>
        <begin position="1285"/>
        <end position="1311"/>
    </location>
</feature>
<feature type="region of interest" description="Disordered" evidence="3">
    <location>
        <begin position="1402"/>
        <end position="1456"/>
    </location>
</feature>
<feature type="region of interest" description="Required for homodimerization" evidence="10">
    <location>
        <begin position="1670"/>
        <end position="1743"/>
    </location>
</feature>
<feature type="compositionally biased region" description="Low complexity" evidence="3">
    <location>
        <begin position="338"/>
        <end position="349"/>
    </location>
</feature>
<feature type="compositionally biased region" description="Polar residues" evidence="3">
    <location>
        <begin position="355"/>
        <end position="364"/>
    </location>
</feature>
<feature type="compositionally biased region" description="Low complexity" evidence="3">
    <location>
        <begin position="492"/>
        <end position="513"/>
    </location>
</feature>
<feature type="compositionally biased region" description="Polar residues" evidence="3">
    <location>
        <begin position="675"/>
        <end position="694"/>
    </location>
</feature>
<feature type="compositionally biased region" description="Low complexity" evidence="3">
    <location>
        <begin position="718"/>
        <end position="730"/>
    </location>
</feature>
<feature type="compositionally biased region" description="Polar residues" evidence="3">
    <location>
        <begin position="748"/>
        <end position="758"/>
    </location>
</feature>
<feature type="compositionally biased region" description="Polar residues" evidence="3">
    <location>
        <begin position="820"/>
        <end position="841"/>
    </location>
</feature>
<feature type="compositionally biased region" description="Pro residues" evidence="3">
    <location>
        <begin position="864"/>
        <end position="874"/>
    </location>
</feature>
<feature type="compositionally biased region" description="Polar residues" evidence="3">
    <location>
        <begin position="889"/>
        <end position="902"/>
    </location>
</feature>
<feature type="compositionally biased region" description="Basic and acidic residues" evidence="3">
    <location>
        <begin position="903"/>
        <end position="920"/>
    </location>
</feature>
<feature type="compositionally biased region" description="Basic and acidic residues" evidence="3">
    <location>
        <begin position="1052"/>
        <end position="1062"/>
    </location>
</feature>
<feature type="compositionally biased region" description="Basic and acidic residues" evidence="3">
    <location>
        <begin position="1084"/>
        <end position="1094"/>
    </location>
</feature>
<feature type="compositionally biased region" description="Acidic residues" evidence="3">
    <location>
        <begin position="1406"/>
        <end position="1423"/>
    </location>
</feature>
<feature type="compositionally biased region" description="Basic and acidic residues" evidence="3">
    <location>
        <begin position="1424"/>
        <end position="1433"/>
    </location>
</feature>
<feature type="compositionally biased region" description="Polar residues" evidence="3">
    <location>
        <begin position="1440"/>
        <end position="1450"/>
    </location>
</feature>
<feature type="modified residue" description="Phosphoserine" evidence="17 18">
    <location>
        <position position="281"/>
    </location>
</feature>
<feature type="modified residue" description="Phosphoserine" evidence="16">
    <location>
        <position position="540"/>
    </location>
</feature>
<feature type="modified residue" description="Phosphoserine" evidence="18">
    <location>
        <position position="572"/>
    </location>
</feature>
<feature type="modified residue" description="Phosphoserine" evidence="16 18">
    <location>
        <position position="587"/>
    </location>
</feature>
<feature type="modified residue" description="Phosphotyrosine" evidence="11 17">
    <location>
        <position position="635"/>
    </location>
</feature>
<feature type="modified residue" description="Phosphotyrosine" evidence="1">
    <location>
        <position position="641"/>
    </location>
</feature>
<feature type="modified residue" description="Phosphoserine" evidence="18">
    <location>
        <position position="648"/>
    </location>
</feature>
<feature type="modified residue" description="Phosphotyrosine" evidence="6">
    <location>
        <position position="665"/>
    </location>
</feature>
<feature type="modified residue" description="Phosphoserine" evidence="1">
    <location>
        <position position="826"/>
    </location>
</feature>
<feature type="modified residue" description="Phosphoserine" evidence="18">
    <location>
        <position position="854"/>
    </location>
</feature>
<feature type="modified residue" description="Phosphoserine" evidence="18">
    <location>
        <position position="898"/>
    </location>
</feature>
<feature type="modified residue" description="Phosphothreonine" evidence="18 19">
    <location>
        <position position="1151"/>
    </location>
</feature>
<feature type="modified residue" description="Phosphotyrosine" evidence="7">
    <location>
        <position position="1188"/>
    </location>
</feature>
<feature type="modified residue" description="Phosphoserine" evidence="18">
    <location>
        <position position="1374"/>
    </location>
</feature>
<feature type="sequence variant" id="VAR_041817" description="In dbSNP:rs35459975." evidence="4">
    <original>G</original>
    <variation>R</variation>
    <location>
        <position position="213"/>
    </location>
</feature>
<feature type="sequence variant" id="VAR_041818" description="In dbSNP:rs56129428." evidence="4">
    <original>V</original>
    <variation>I</variation>
    <location>
        <position position="240"/>
    </location>
</feature>
<feature type="sequence variant" id="VAR_041819" description="In dbSNP:rs35335169." evidence="4">
    <original>S</original>
    <variation>P</variation>
    <location>
        <position position="440"/>
    </location>
</feature>
<feature type="sequence variant" id="VAR_041820" description="In a bladder carcinoma NOS sample; somatic mutation." evidence="4">
    <original>H</original>
    <variation>Q</variation>
    <location>
        <position position="611"/>
    </location>
</feature>
<feature type="sequence variant" id="VAR_041821" description="In dbSNP:rs34885462." evidence="4">
    <original>S</original>
    <variation>I</variation>
    <location>
        <position position="792"/>
    </location>
</feature>
<feature type="sequence variant" id="VAR_041822" description="In dbSNP:rs56388121." evidence="4">
    <original>D</original>
    <variation>E</variation>
    <location>
        <position position="836"/>
    </location>
</feature>
<feature type="sequence variant" id="VAR_041823" description="In a metastatic melanoma sample; somatic mutation." evidence="4">
    <original>S</original>
    <variation>F</variation>
    <location>
        <position position="1035"/>
    </location>
</feature>
<feature type="sequence variant" id="VAR_041824" description="In dbSNP:rs12909704." evidence="4">
    <original>R</original>
    <variation>K</variation>
    <location>
        <position position="1071"/>
    </location>
</feature>
<feature type="sequence variant" id="VAR_041825" description="In dbSNP:rs56133554." evidence="4">
    <original>T</original>
    <variation>P</variation>
    <location>
        <position position="1077"/>
    </location>
</feature>
<feature type="sequence variant" id="VAR_041826" description="In a metastatic melanoma sample; somatic mutation." evidence="4">
    <original>P</original>
    <variation>L</variation>
    <location>
        <position position="1145"/>
    </location>
</feature>
<feature type="sequence variant" id="VAR_041827" description="In dbSNP:rs56079860." evidence="4">
    <original>P</original>
    <variation>Q</variation>
    <location>
        <position position="1408"/>
    </location>
</feature>
<feature type="sequence variant" id="VAR_041828" description="In dbSNP:rs1867780." evidence="4">
    <original>S</original>
    <variation>T</variation>
    <location>
        <position position="1542"/>
    </location>
</feature>
<feature type="sequence variant" id="VAR_041829" description="In dbSNP:rs34004337." evidence="4">
    <original>R</original>
    <variation>G</variation>
    <location>
        <position position="1699"/>
    </location>
</feature>
<feature type="mutagenesis site" description="50% reduction in interaction with GRB2. No effect on interaction with SHC1.">
    <original>Y</original>
    <variation>E</variation>
    <location>
        <position position="635"/>
    </location>
</feature>
<feature type="mutagenesis site" description="Impairs interaction with tensin TNS3 and association with integrin ITGB1. 50% reduction in interaction with GRB2. No effect on interaction with unphosphorylated SHC1 but reduces interaction with tyrosine-phosphorylated SHC1. Reduces focal adhesion localization. Reduces cell migration." evidence="11">
    <original>Y</original>
    <variation>F</variation>
    <location>
        <position position="635"/>
    </location>
</feature>
<feature type="mutagenesis site" description="No effect on localization with actin. Decreases localization in focal adhesion. Fails to regulate focal adhesion dynamics. Decreases cell migration." evidence="6">
    <original>Y</original>
    <variation>E</variation>
    <location>
        <position position="665"/>
    </location>
</feature>
<feature type="mutagenesis site" description="No effect on focal adhesion subcellular localization. Does not affect colocalization with F-actin." evidence="6">
    <original>Y</original>
    <variation>F</variation>
    <location>
        <position position="665"/>
    </location>
</feature>
<feature type="mutagenesis site" description="Fails to bind SHC1. Reduced recruitment of SHC1 to focal adhesions. Slightly reduces interaction with GRB2. Does not affect interaction with RASAL2. Does not affect association with integrin ITGB1." evidence="7 11">
    <original>Y</original>
    <variation>F</variation>
    <location>
        <position position="1188"/>
    </location>
</feature>
<feature type="mutagenesis site" description="No effect on interaction with PRAG1." evidence="9">
    <original>F</original>
    <variation>A</variation>
    <location>
        <position position="1609"/>
    </location>
</feature>
<feature type="mutagenesis site" description="Disrupts homodimerization." evidence="10">
    <original>A</original>
    <variation>D</variation>
    <location>
        <position position="1707"/>
    </location>
</feature>
<feature type="sequence conflict" description="In Ref. 2; BAC87076." evidence="14" ref="2">
    <original>S</original>
    <variation>F</variation>
    <location>
        <position position="779"/>
    </location>
</feature>
<feature type="sequence conflict" description="In Ref. 2; AK091802." evidence="14" ref="2">
    <original>SHMT</original>
    <variation>RYVK</variation>
    <location>
        <begin position="1046"/>
        <end position="1049"/>
    </location>
</feature>
<feature type="sequence conflict" description="In Ref. 3; BAB84983." evidence="14" ref="3">
    <original>QSRAAMIPP</original>
    <variation>KCKCPISSI</variation>
    <location>
        <begin position="1112"/>
        <end position="1120"/>
    </location>
</feature>
<feature type="sequence conflict" description="In Ref. 2; BAC87076." evidence="14" ref="2">
    <original>LAVR</original>
    <variation>SQEF</variation>
    <location>
        <begin position="1375"/>
        <end position="1378"/>
    </location>
</feature>
<feature type="helix" evidence="20">
    <location>
        <begin position="1286"/>
        <end position="1309"/>
    </location>
</feature>
<feature type="helix" evidence="20">
    <location>
        <begin position="1323"/>
        <end position="1326"/>
    </location>
</feature>
<feature type="strand" evidence="20">
    <location>
        <begin position="1327"/>
        <end position="1330"/>
    </location>
</feature>
<feature type="strand" evidence="20">
    <location>
        <begin position="1335"/>
        <end position="1337"/>
    </location>
</feature>
<feature type="strand" evidence="20">
    <location>
        <begin position="1339"/>
        <end position="1348"/>
    </location>
</feature>
<feature type="strand" evidence="20">
    <location>
        <begin position="1351"/>
        <end position="1361"/>
    </location>
</feature>
<feature type="helix" evidence="20">
    <location>
        <begin position="1374"/>
        <end position="1379"/>
    </location>
</feature>
<feature type="strand" evidence="20">
    <location>
        <begin position="1393"/>
        <end position="1398"/>
    </location>
</feature>
<feature type="helix" evidence="20">
    <location>
        <begin position="1400"/>
        <end position="1402"/>
    </location>
</feature>
<feature type="strand" evidence="20">
    <location>
        <begin position="1456"/>
        <end position="1465"/>
    </location>
</feature>
<feature type="helix" evidence="20">
    <location>
        <begin position="1471"/>
        <end position="1476"/>
    </location>
</feature>
<feature type="helix" evidence="20">
    <location>
        <begin position="1479"/>
        <end position="1484"/>
    </location>
</feature>
<feature type="helix" evidence="20">
    <location>
        <begin position="1486"/>
        <end position="1507"/>
    </location>
</feature>
<feature type="helix" evidence="20">
    <location>
        <begin position="1508"/>
        <end position="1510"/>
    </location>
</feature>
<feature type="helix" evidence="20">
    <location>
        <begin position="1519"/>
        <end position="1521"/>
    </location>
</feature>
<feature type="strand" evidence="20">
    <location>
        <begin position="1522"/>
        <end position="1525"/>
    </location>
</feature>
<feature type="strand" evidence="20">
    <location>
        <begin position="1550"/>
        <end position="1553"/>
    </location>
</feature>
<feature type="helix" evidence="20">
    <location>
        <begin position="1574"/>
        <end position="1576"/>
    </location>
</feature>
<feature type="helix" evidence="20">
    <location>
        <begin position="1579"/>
        <end position="1583"/>
    </location>
</feature>
<feature type="helix" evidence="20">
    <location>
        <begin position="1590"/>
        <end position="1602"/>
    </location>
</feature>
<feature type="helix" evidence="20">
    <location>
        <begin position="1608"/>
        <end position="1611"/>
    </location>
</feature>
<feature type="turn" evidence="20">
    <location>
        <begin position="1616"/>
        <end position="1619"/>
    </location>
</feature>
<feature type="turn" evidence="20">
    <location>
        <begin position="1622"/>
        <end position="1624"/>
    </location>
</feature>
<feature type="helix" evidence="20">
    <location>
        <begin position="1635"/>
        <end position="1645"/>
    </location>
</feature>
<feature type="turn" evidence="20">
    <location>
        <begin position="1650"/>
        <end position="1652"/>
    </location>
</feature>
<feature type="helix" evidence="20">
    <location>
        <begin position="1656"/>
        <end position="1667"/>
    </location>
</feature>
<feature type="helix" evidence="20">
    <location>
        <begin position="1672"/>
        <end position="1680"/>
    </location>
</feature>
<feature type="helix" evidence="20">
    <location>
        <begin position="1684"/>
        <end position="1709"/>
    </location>
</feature>
<feature type="helix" evidence="20">
    <location>
        <begin position="1719"/>
        <end position="1730"/>
    </location>
</feature>
<feature type="helix" evidence="20">
    <location>
        <begin position="1733"/>
        <end position="1743"/>
    </location>
</feature>
<gene>
    <name type="primary">PEAK1</name>
    <name type="synonym">KIAA2002</name>
</gene>
<evidence type="ECO:0000250" key="1">
    <source>
        <dbReference type="UniProtKB" id="Q69Z38"/>
    </source>
</evidence>
<evidence type="ECO:0000255" key="2">
    <source>
        <dbReference type="PROSITE-ProRule" id="PRU00159"/>
    </source>
</evidence>
<evidence type="ECO:0000256" key="3">
    <source>
        <dbReference type="SAM" id="MobiDB-lite"/>
    </source>
</evidence>
<evidence type="ECO:0000269" key="4">
    <source>
    </source>
</evidence>
<evidence type="ECO:0000269" key="5">
    <source>
    </source>
</evidence>
<evidence type="ECO:0000269" key="6">
    <source>
    </source>
</evidence>
<evidence type="ECO:0000269" key="7">
    <source>
    </source>
</evidence>
<evidence type="ECO:0000269" key="8">
    <source>
    </source>
</evidence>
<evidence type="ECO:0000269" key="9">
    <source>
    </source>
</evidence>
<evidence type="ECO:0000269" key="10">
    <source>
    </source>
</evidence>
<evidence type="ECO:0000269" key="11">
    <source>
    </source>
</evidence>
<evidence type="ECO:0000303" key="12">
    <source>
    </source>
</evidence>
<evidence type="ECO:0000303" key="13">
    <source>
    </source>
</evidence>
<evidence type="ECO:0000305" key="14"/>
<evidence type="ECO:0007744" key="15">
    <source>
        <dbReference type="PDB" id="6BHC"/>
    </source>
</evidence>
<evidence type="ECO:0007744" key="16">
    <source>
    </source>
</evidence>
<evidence type="ECO:0007744" key="17">
    <source>
    </source>
</evidence>
<evidence type="ECO:0007744" key="18">
    <source>
    </source>
</evidence>
<evidence type="ECO:0007744" key="19">
    <source>
    </source>
</evidence>
<evidence type="ECO:0007829" key="20">
    <source>
        <dbReference type="PDB" id="6BHC"/>
    </source>
</evidence>
<name>PEAK1_HUMAN</name>
<protein>
    <recommendedName>
        <fullName evidence="14">Inactive tyrosine-protein kinase PEAK1</fullName>
    </recommendedName>
    <alternativeName>
        <fullName evidence="12">Pseudopodium-enriched atypical kinase 1</fullName>
    </alternativeName>
    <alternativeName>
        <fullName evidence="13">Sugen kinase 269</fullName>
    </alternativeName>
    <alternativeName>
        <fullName>Tyrosine-protein kinase SgK269</fullName>
    </alternativeName>
</protein>
<reference key="1">
    <citation type="journal article" date="2006" name="Nature">
        <title>Analysis of the DNA sequence and duplication history of human chromosome 15.</title>
        <authorList>
            <person name="Zody M.C."/>
            <person name="Garber M."/>
            <person name="Sharpe T."/>
            <person name="Young S.K."/>
            <person name="Rowen L."/>
            <person name="O'Neill K."/>
            <person name="Whittaker C.A."/>
            <person name="Kamal M."/>
            <person name="Chang J.L."/>
            <person name="Cuomo C.A."/>
            <person name="Dewar K."/>
            <person name="FitzGerald M.G."/>
            <person name="Kodira C.D."/>
            <person name="Madan A."/>
            <person name="Qin S."/>
            <person name="Yang X."/>
            <person name="Abbasi N."/>
            <person name="Abouelleil A."/>
            <person name="Arachchi H.M."/>
            <person name="Baradarani L."/>
            <person name="Birditt B."/>
            <person name="Bloom S."/>
            <person name="Bloom T."/>
            <person name="Borowsky M.L."/>
            <person name="Burke J."/>
            <person name="Butler J."/>
            <person name="Cook A."/>
            <person name="DeArellano K."/>
            <person name="DeCaprio D."/>
            <person name="Dorris L. III"/>
            <person name="Dors M."/>
            <person name="Eichler E.E."/>
            <person name="Engels R."/>
            <person name="Fahey J."/>
            <person name="Fleetwood P."/>
            <person name="Friedman C."/>
            <person name="Gearin G."/>
            <person name="Hall J.L."/>
            <person name="Hensley G."/>
            <person name="Johnson E."/>
            <person name="Jones C."/>
            <person name="Kamat A."/>
            <person name="Kaur A."/>
            <person name="Locke D.P."/>
            <person name="Madan A."/>
            <person name="Munson G."/>
            <person name="Jaffe D.B."/>
            <person name="Lui A."/>
            <person name="Macdonald P."/>
            <person name="Mauceli E."/>
            <person name="Naylor J.W."/>
            <person name="Nesbitt R."/>
            <person name="Nicol R."/>
            <person name="O'Leary S.B."/>
            <person name="Ratcliffe A."/>
            <person name="Rounsley S."/>
            <person name="She X."/>
            <person name="Sneddon K.M.B."/>
            <person name="Stewart S."/>
            <person name="Sougnez C."/>
            <person name="Stone S.M."/>
            <person name="Topham K."/>
            <person name="Vincent D."/>
            <person name="Wang S."/>
            <person name="Zimmer A.R."/>
            <person name="Birren B.W."/>
            <person name="Hood L."/>
            <person name="Lander E.S."/>
            <person name="Nusbaum C."/>
        </authorList>
    </citation>
    <scope>NUCLEOTIDE SEQUENCE [LARGE SCALE GENOMIC DNA]</scope>
</reference>
<reference key="2">
    <citation type="journal article" date="2004" name="Nat. Genet.">
        <title>Complete sequencing and characterization of 21,243 full-length human cDNAs.</title>
        <authorList>
            <person name="Ota T."/>
            <person name="Suzuki Y."/>
            <person name="Nishikawa T."/>
            <person name="Otsuki T."/>
            <person name="Sugiyama T."/>
            <person name="Irie R."/>
            <person name="Wakamatsu A."/>
            <person name="Hayashi K."/>
            <person name="Sato H."/>
            <person name="Nagai K."/>
            <person name="Kimura K."/>
            <person name="Makita H."/>
            <person name="Sekine M."/>
            <person name="Obayashi M."/>
            <person name="Nishi T."/>
            <person name="Shibahara T."/>
            <person name="Tanaka T."/>
            <person name="Ishii S."/>
            <person name="Yamamoto J."/>
            <person name="Saito K."/>
            <person name="Kawai Y."/>
            <person name="Isono Y."/>
            <person name="Nakamura Y."/>
            <person name="Nagahari K."/>
            <person name="Murakami K."/>
            <person name="Yasuda T."/>
            <person name="Iwayanagi T."/>
            <person name="Wagatsuma M."/>
            <person name="Shiratori A."/>
            <person name="Sudo H."/>
            <person name="Hosoiri T."/>
            <person name="Kaku Y."/>
            <person name="Kodaira H."/>
            <person name="Kondo H."/>
            <person name="Sugawara M."/>
            <person name="Takahashi M."/>
            <person name="Kanda K."/>
            <person name="Yokoi T."/>
            <person name="Furuya T."/>
            <person name="Kikkawa E."/>
            <person name="Omura Y."/>
            <person name="Abe K."/>
            <person name="Kamihara K."/>
            <person name="Katsuta N."/>
            <person name="Sato K."/>
            <person name="Tanikawa M."/>
            <person name="Yamazaki M."/>
            <person name="Ninomiya K."/>
            <person name="Ishibashi T."/>
            <person name="Yamashita H."/>
            <person name="Murakawa K."/>
            <person name="Fujimori K."/>
            <person name="Tanai H."/>
            <person name="Kimata M."/>
            <person name="Watanabe M."/>
            <person name="Hiraoka S."/>
            <person name="Chiba Y."/>
            <person name="Ishida S."/>
            <person name="Ono Y."/>
            <person name="Takiguchi S."/>
            <person name="Watanabe S."/>
            <person name="Yosida M."/>
            <person name="Hotuta T."/>
            <person name="Kusano J."/>
            <person name="Kanehori K."/>
            <person name="Takahashi-Fujii A."/>
            <person name="Hara H."/>
            <person name="Tanase T.-O."/>
            <person name="Nomura Y."/>
            <person name="Togiya S."/>
            <person name="Komai F."/>
            <person name="Hara R."/>
            <person name="Takeuchi K."/>
            <person name="Arita M."/>
            <person name="Imose N."/>
            <person name="Musashino K."/>
            <person name="Yuuki H."/>
            <person name="Oshima A."/>
            <person name="Sasaki N."/>
            <person name="Aotsuka S."/>
            <person name="Yoshikawa Y."/>
            <person name="Matsunawa H."/>
            <person name="Ichihara T."/>
            <person name="Shiohata N."/>
            <person name="Sano S."/>
            <person name="Moriya S."/>
            <person name="Momiyama H."/>
            <person name="Satoh N."/>
            <person name="Takami S."/>
            <person name="Terashima Y."/>
            <person name="Suzuki O."/>
            <person name="Nakagawa S."/>
            <person name="Senoh A."/>
            <person name="Mizoguchi H."/>
            <person name="Goto Y."/>
            <person name="Shimizu F."/>
            <person name="Wakebe H."/>
            <person name="Hishigaki H."/>
            <person name="Watanabe T."/>
            <person name="Sugiyama A."/>
            <person name="Takemoto M."/>
            <person name="Kawakami B."/>
            <person name="Yamazaki M."/>
            <person name="Watanabe K."/>
            <person name="Kumagai A."/>
            <person name="Itakura S."/>
            <person name="Fukuzumi Y."/>
            <person name="Fujimori Y."/>
            <person name="Komiyama M."/>
            <person name="Tashiro H."/>
            <person name="Tanigami A."/>
            <person name="Fujiwara T."/>
            <person name="Ono T."/>
            <person name="Yamada K."/>
            <person name="Fujii Y."/>
            <person name="Ozaki K."/>
            <person name="Hirao M."/>
            <person name="Ohmori Y."/>
            <person name="Kawabata A."/>
            <person name="Hikiji T."/>
            <person name="Kobatake N."/>
            <person name="Inagaki H."/>
            <person name="Ikema Y."/>
            <person name="Okamoto S."/>
            <person name="Okitani R."/>
            <person name="Kawakami T."/>
            <person name="Noguchi S."/>
            <person name="Itoh T."/>
            <person name="Shigeta K."/>
            <person name="Senba T."/>
            <person name="Matsumura K."/>
            <person name="Nakajima Y."/>
            <person name="Mizuno T."/>
            <person name="Morinaga M."/>
            <person name="Sasaki M."/>
            <person name="Togashi T."/>
            <person name="Oyama M."/>
            <person name="Hata H."/>
            <person name="Watanabe M."/>
            <person name="Komatsu T."/>
            <person name="Mizushima-Sugano J."/>
            <person name="Satoh T."/>
            <person name="Shirai Y."/>
            <person name="Takahashi Y."/>
            <person name="Nakagawa K."/>
            <person name="Okumura K."/>
            <person name="Nagase T."/>
            <person name="Nomura N."/>
            <person name="Kikuchi H."/>
            <person name="Masuho Y."/>
            <person name="Yamashita R."/>
            <person name="Nakai K."/>
            <person name="Yada T."/>
            <person name="Nakamura Y."/>
            <person name="Ohara O."/>
            <person name="Isogai T."/>
            <person name="Sugano S."/>
        </authorList>
    </citation>
    <scope>NUCLEOTIDE SEQUENCE [LARGE SCALE MRNA] OF 537-1746</scope>
    <source>
        <tissue>Lung</tissue>
        <tissue>Mesangial cell</tissue>
        <tissue>Smooth muscle</tissue>
    </source>
</reference>
<reference key="3">
    <citation type="submission" date="2002-01" db="EMBL/GenBank/DDBJ databases">
        <title>The nucleotide sequence of a long cDNA clone isolated from human spleen.</title>
        <authorList>
            <person name="Jikuya H."/>
            <person name="Takano J."/>
            <person name="Nomura N."/>
            <person name="Kikuno R."/>
            <person name="Nagase T."/>
            <person name="Ohara O."/>
        </authorList>
    </citation>
    <scope>NUCLEOTIDE SEQUENCE [LARGE SCALE MRNA] OF 707-1120</scope>
    <source>
        <tissue>Spleen</tissue>
    </source>
</reference>
<reference key="4">
    <citation type="journal article" date="2002" name="DNA Res.">
        <title>Characterization of size-fractionated cDNA libraries generated by the in vitro recombination-assisted method.</title>
        <authorList>
            <person name="Ohara O."/>
            <person name="Nagase T."/>
            <person name="Mitsui G."/>
            <person name="Kohga H."/>
            <person name="Kikuno R."/>
            <person name="Hiraoka S."/>
            <person name="Takahashi Y."/>
            <person name="Kitajima S."/>
            <person name="Saga Y."/>
            <person name="Koseki H."/>
        </authorList>
    </citation>
    <scope>NUCLEOTIDE SEQUENCE [LARGE SCALE MRNA] OF 983-1746</scope>
    <source>
        <tissue>Brain</tissue>
    </source>
</reference>
<reference key="5">
    <citation type="journal article" date="2002" name="Science">
        <title>The protein kinase complement of the human genome.</title>
        <authorList>
            <person name="Manning G."/>
            <person name="Whyte D.B."/>
            <person name="Martinez R."/>
            <person name="Hunter T."/>
            <person name="Sudarsanam S."/>
        </authorList>
    </citation>
    <scope>IDENTIFICATION</scope>
</reference>
<reference key="6">
    <citation type="journal article" date="2006" name="Cell">
        <title>Global, in vivo, and site-specific phosphorylation dynamics in signaling networks.</title>
        <authorList>
            <person name="Olsen J.V."/>
            <person name="Blagoev B."/>
            <person name="Gnad F."/>
            <person name="Macek B."/>
            <person name="Kumar C."/>
            <person name="Mortensen P."/>
            <person name="Mann M."/>
        </authorList>
    </citation>
    <scope>IDENTIFICATION BY MASS SPECTROMETRY [LARGE SCALE ANALYSIS]</scope>
    <source>
        <tissue>Cervix carcinoma</tissue>
    </source>
</reference>
<reference key="7">
    <citation type="journal article" date="2008" name="Proc. Natl. Acad. Sci. U.S.A.">
        <title>A quantitative atlas of mitotic phosphorylation.</title>
        <authorList>
            <person name="Dephoure N."/>
            <person name="Zhou C."/>
            <person name="Villen J."/>
            <person name="Beausoleil S.A."/>
            <person name="Bakalarski C.E."/>
            <person name="Elledge S.J."/>
            <person name="Gygi S.P."/>
        </authorList>
    </citation>
    <scope>PHOSPHORYLATION [LARGE SCALE ANALYSIS] AT SER-540 AND SER-587</scope>
    <scope>IDENTIFICATION BY MASS SPECTROMETRY [LARGE SCALE ANALYSIS]</scope>
    <source>
        <tissue>Cervix carcinoma</tissue>
    </source>
</reference>
<reference key="8">
    <citation type="journal article" date="2009" name="Anal. Chem.">
        <title>Lys-N and trypsin cover complementary parts of the phosphoproteome in a refined SCX-based approach.</title>
        <authorList>
            <person name="Gauci S."/>
            <person name="Helbig A.O."/>
            <person name="Slijper M."/>
            <person name="Krijgsveld J."/>
            <person name="Heck A.J."/>
            <person name="Mohammed S."/>
        </authorList>
    </citation>
    <scope>IDENTIFICATION BY MASS SPECTROMETRY [LARGE SCALE ANALYSIS]</scope>
</reference>
<reference key="9">
    <citation type="journal article" date="2010" name="Proc. Natl. Acad. Sci. U.S.A.">
        <title>Pseudopodium-enriched atypical kinase 1 regulates the cytoskeleton and cancer progression.</title>
        <authorList>
            <person name="Wang Y."/>
            <person name="Kelber J.A."/>
            <person name="Tran Cao H.S."/>
            <person name="Cantin G.T."/>
            <person name="Lin R."/>
            <person name="Wang W."/>
            <person name="Kaushal S."/>
            <person name="Bristow J.M."/>
            <person name="Edgington T.S."/>
            <person name="Hoffman R.M."/>
            <person name="Bouvet M."/>
            <person name="Yates J.R. III"/>
            <person name="Klemke R.L."/>
        </authorList>
    </citation>
    <scope>FUNCTION</scope>
    <scope>INTERACTION WITH BCAR1 AND CRK</scope>
    <scope>SUBCELLULAR LOCATION</scope>
    <scope>PHOSPHORYLATION BY CSK</scope>
</reference>
<reference key="10">
    <citation type="journal article" date="2010" name="Proc. Natl. Acad. Sci. U.S.A.">
        <authorList>
            <person name="Wang Y."/>
            <person name="Kelber J.A."/>
            <person name="Tran Cao H.S."/>
            <person name="Cantin G.T."/>
            <person name="Lin R."/>
            <person name="Wang W."/>
            <person name="Kaushal S."/>
            <person name="Bristow J.M."/>
            <person name="Edgington T.S."/>
            <person name="Hoffman R.M."/>
            <person name="Bouvet M."/>
            <person name="Yates J.R. III"/>
            <person name="Klemke R.L."/>
        </authorList>
    </citation>
    <scope>ERRATUM OF PUBMED:20534451</scope>
</reference>
<reference key="11">
    <citation type="journal article" date="2010" name="Sci. Signal.">
        <title>Quantitative phosphoproteomics reveals widespread full phosphorylation site occupancy during mitosis.</title>
        <authorList>
            <person name="Olsen J.V."/>
            <person name="Vermeulen M."/>
            <person name="Santamaria A."/>
            <person name="Kumar C."/>
            <person name="Miller M.L."/>
            <person name="Jensen L.J."/>
            <person name="Gnad F."/>
            <person name="Cox J."/>
            <person name="Jensen T.S."/>
            <person name="Nigg E.A."/>
            <person name="Brunak S."/>
            <person name="Mann M."/>
        </authorList>
    </citation>
    <scope>PHOSPHORYLATION [LARGE SCALE ANALYSIS] AT SER-281 AND TYR-635</scope>
    <scope>IDENTIFICATION BY MASS SPECTROMETRY [LARGE SCALE ANALYSIS]</scope>
    <source>
        <tissue>Cervix carcinoma</tissue>
    </source>
</reference>
<reference key="12">
    <citation type="journal article" date="2013" name="J. Biol. Chem.">
        <title>Dynamic phosphorylation of tyrosine 665 in pseudopodium-enriched atypical kinase 1 (PEAK1) is essential for the regulation of cell migration and focal adhesion turnover.</title>
        <authorList>
            <person name="Bristow J.M."/>
            <person name="Reno T.A."/>
            <person name="Jo M."/>
            <person name="Gonias S.L."/>
            <person name="Klemke R.L."/>
        </authorList>
    </citation>
    <scope>PHOSPHORYLATION AT TYR-665</scope>
    <scope>MUTAGENESIS OF TYR-665</scope>
    <scope>SUBCELLULAR LOCATION</scope>
    <scope>FUNCTION</scope>
</reference>
<reference key="13">
    <citation type="journal article" date="2013" name="Nature">
        <title>Temporal regulation of EGF signalling networks by the scaffold protein Shc1.</title>
        <authorList>
            <person name="Zheng Y."/>
            <person name="Zhang C."/>
            <person name="Croucher D.R."/>
            <person name="Soliman M.A."/>
            <person name="St-Denis N."/>
            <person name="Pasculescu A."/>
            <person name="Taylor L."/>
            <person name="Tate S.A."/>
            <person name="Hardy W.R."/>
            <person name="Colwill K."/>
            <person name="Dai A.Y."/>
            <person name="Bagshaw R."/>
            <person name="Dennis J.W."/>
            <person name="Gingras A.C."/>
            <person name="Daly R.J."/>
            <person name="Pawson T."/>
        </authorList>
    </citation>
    <scope>FUNCTION</scope>
    <scope>INTERACTION WITH SHC1</scope>
    <scope>PHOSPHORYLATION AT TYR-1188</scope>
    <scope>MUTAGENESIS OF TYR-1188</scope>
    <scope>IN COMPLEX WITH PPP1CA</scope>
    <scope>PPP1CC AND SHC1</scope>
    <scope>IDENTIFICATION BY MASS SPECTROMETRY</scope>
</reference>
<reference key="14">
    <citation type="journal article" date="2013" name="J. Proteome Res.">
        <title>Toward a comprehensive characterization of a human cancer cell phosphoproteome.</title>
        <authorList>
            <person name="Zhou H."/>
            <person name="Di Palma S."/>
            <person name="Preisinger C."/>
            <person name="Peng M."/>
            <person name="Polat A.N."/>
            <person name="Heck A.J."/>
            <person name="Mohammed S."/>
        </authorList>
    </citation>
    <scope>PHOSPHORYLATION [LARGE SCALE ANALYSIS] AT SER-281; SER-572; SER-587; SER-648; SER-854; SER-898; THR-1151 AND SER-1374</scope>
    <scope>IDENTIFICATION BY MASS SPECTROMETRY [LARGE SCALE ANALYSIS]</scope>
    <source>
        <tissue>Cervix carcinoma</tissue>
        <tissue>Erythroleukemia</tissue>
    </source>
</reference>
<reference key="15">
    <citation type="journal article" date="2014" name="Biochem. J.">
        <title>A robust methodology to subclassify pseudokinases based on their nucleotide-binding properties.</title>
        <authorList>
            <person name="Murphy J.M."/>
            <person name="Zhang Q."/>
            <person name="Young S.N."/>
            <person name="Reese M.L."/>
            <person name="Bailey F.P."/>
            <person name="Eyers P.A."/>
            <person name="Ungureanu D."/>
            <person name="Hammaren H."/>
            <person name="Silvennoinen O."/>
            <person name="Varghese L.N."/>
            <person name="Chen K."/>
            <person name="Tripaydonis A."/>
            <person name="Jura N."/>
            <person name="Fukuda K."/>
            <person name="Qin J."/>
            <person name="Nimchuk Z."/>
            <person name="Mudgett M.B."/>
            <person name="Elowe S."/>
            <person name="Gee C.L."/>
            <person name="Liu L."/>
            <person name="Daly R.J."/>
            <person name="Manning G."/>
            <person name="Babon J.J."/>
            <person name="Lucet I.S."/>
        </authorList>
    </citation>
    <scope>LACK OF ATP-BINDING</scope>
</reference>
<reference key="16">
    <citation type="journal article" date="2014" name="J. Proteomics">
        <title>An enzyme assisted RP-RPLC approach for in-depth analysis of human liver phosphoproteome.</title>
        <authorList>
            <person name="Bian Y."/>
            <person name="Song C."/>
            <person name="Cheng K."/>
            <person name="Dong M."/>
            <person name="Wang F."/>
            <person name="Huang J."/>
            <person name="Sun D."/>
            <person name="Wang L."/>
            <person name="Ye M."/>
            <person name="Zou H."/>
        </authorList>
    </citation>
    <scope>PHOSPHORYLATION [LARGE SCALE ANALYSIS] AT THR-1151</scope>
    <scope>IDENTIFICATION BY MASS SPECTROMETRY [LARGE SCALE ANALYSIS]</scope>
    <source>
        <tissue>Liver</tissue>
    </source>
</reference>
<reference key="17">
    <citation type="journal article" date="2017" name="Nat. Commun.">
        <title>Structure of SgK223 pseudokinase reveals novel mechanisms of homotypic and heterotypic association.</title>
        <authorList>
            <person name="Patel O."/>
            <person name="Griffin M.D.W."/>
            <person name="Panjikar S."/>
            <person name="Dai W."/>
            <person name="Ma X."/>
            <person name="Chan H."/>
            <person name="Zheng C."/>
            <person name="Kropp A."/>
            <person name="Murphy J.M."/>
            <person name="Daly R.J."/>
            <person name="Lucet I.S."/>
        </authorList>
    </citation>
    <scope>SUBUNIT</scope>
    <scope>INTERACTION WITH PRAG1</scope>
    <scope>MUTAGENESIS OF PHE-1609</scope>
</reference>
<reference key="18">
    <citation type="journal article" date="2022" name="J. Cell Biol.">
        <title>PEAK1 Y635 phosphorylation regulates cell migration through association with Tensin3 and integrins.</title>
        <authorList>
            <person name="Zuidema A."/>
            <person name="Atherton P."/>
            <person name="Kreft M."/>
            <person name="Hoekman L."/>
            <person name="Bleijerveld O.B."/>
            <person name="Nagaraj N."/>
            <person name="Chen N."/>
            <person name="Faessler R."/>
            <person name="Sonnenberg A."/>
        </authorList>
    </citation>
    <scope>FUNCTION</scope>
    <scope>INTERACTION WITH TNS3; SHC1; RASAL2 AND GRB2</scope>
    <scope>SUBCELLULAR LOCATION</scope>
    <scope>PHOSPHORYLATION AT TYR-635</scope>
    <scope>MUTAGENESIS OF TYR-635 AND TYR-1188</scope>
</reference>
<reference key="19">
    <citation type="journal article" date="2007" name="Nature">
        <title>Patterns of somatic mutation in human cancer genomes.</title>
        <authorList>
            <person name="Greenman C."/>
            <person name="Stephens P."/>
            <person name="Smith R."/>
            <person name="Dalgliesh G.L."/>
            <person name="Hunter C."/>
            <person name="Bignell G."/>
            <person name="Davies H."/>
            <person name="Teague J."/>
            <person name="Butler A."/>
            <person name="Stevens C."/>
            <person name="Edkins S."/>
            <person name="O'Meara S."/>
            <person name="Vastrik I."/>
            <person name="Schmidt E.E."/>
            <person name="Avis T."/>
            <person name="Barthorpe S."/>
            <person name="Bhamra G."/>
            <person name="Buck G."/>
            <person name="Choudhury B."/>
            <person name="Clements J."/>
            <person name="Cole J."/>
            <person name="Dicks E."/>
            <person name="Forbes S."/>
            <person name="Gray K."/>
            <person name="Halliday K."/>
            <person name="Harrison R."/>
            <person name="Hills K."/>
            <person name="Hinton J."/>
            <person name="Jenkinson A."/>
            <person name="Jones D."/>
            <person name="Menzies A."/>
            <person name="Mironenko T."/>
            <person name="Perry J."/>
            <person name="Raine K."/>
            <person name="Richardson D."/>
            <person name="Shepherd R."/>
            <person name="Small A."/>
            <person name="Tofts C."/>
            <person name="Varian J."/>
            <person name="Webb T."/>
            <person name="West S."/>
            <person name="Widaa S."/>
            <person name="Yates A."/>
            <person name="Cahill D.P."/>
            <person name="Louis D.N."/>
            <person name="Goldstraw P."/>
            <person name="Nicholson A.G."/>
            <person name="Brasseur F."/>
            <person name="Looijenga L."/>
            <person name="Weber B.L."/>
            <person name="Chiew Y.-E."/>
            <person name="DeFazio A."/>
            <person name="Greaves M.F."/>
            <person name="Green A.R."/>
            <person name="Campbell P."/>
            <person name="Birney E."/>
            <person name="Easton D.F."/>
            <person name="Chenevix-Trench G."/>
            <person name="Tan M.-H."/>
            <person name="Khoo S.K."/>
            <person name="Teh B.T."/>
            <person name="Yuen S.T."/>
            <person name="Leung S.Y."/>
            <person name="Wooster R."/>
            <person name="Futreal P.A."/>
            <person name="Stratton M.R."/>
        </authorList>
    </citation>
    <scope>VARIANTS [LARGE SCALE ANALYSIS] ARG-213; ILE-240; PRO-440; GLN-611; ILE-792; GLU-836; PHE-1035; LYS-1071; PRO-1077; LEU-1145; GLN-1408; THR-1542 AND GLY-1699</scope>
</reference>
<reference evidence="15" key="20">
    <citation type="journal article" date="2018" name="J. Biol. Chem.">
        <title>The crystal structure of pseudokinase PEAK1 (Sugen kinase 269) reveals an unusual catalytic cleft and a novel mode of kinase fold dimerization.</title>
        <authorList>
            <person name="Ha B.H."/>
            <person name="Boggon T.J."/>
        </authorList>
    </citation>
    <scope>X-RAY CRYSTALLOGRAPHY (2.30 ANGSTROMS) OF 1272-1743</scope>
    <scope>MUTAGENESIS OF ALA-1707</scope>
    <scope>SUBUNIT</scope>
    <scope>DOMAIN</scope>
</reference>